<sequence length="148" mass="16230">MKRVLIIHGPNVNLTGKREKEVYGDINYEEINNLIKREAAKLDIAVKIQQSNSEGEIINLIHSAENNFDAIIINPAAYTHYSLAIMDAIAAVSVPVIEVHISNIFGREDYRKTSVTASKCKGVITGFGPYSYVLALNAVKLLEDSIGG</sequence>
<proteinExistence type="inferred from homology"/>
<reference key="1">
    <citation type="submission" date="2008-01" db="EMBL/GenBank/DDBJ databases">
        <title>Complete sequence of Thermoanaerobacter pseudethanolicus 39E.</title>
        <authorList>
            <person name="Copeland A."/>
            <person name="Lucas S."/>
            <person name="Lapidus A."/>
            <person name="Barry K."/>
            <person name="Glavina del Rio T."/>
            <person name="Dalin E."/>
            <person name="Tice H."/>
            <person name="Pitluck S."/>
            <person name="Bruce D."/>
            <person name="Goodwin L."/>
            <person name="Saunders E."/>
            <person name="Brettin T."/>
            <person name="Detter J.C."/>
            <person name="Han C."/>
            <person name="Schmutz J."/>
            <person name="Larimer F."/>
            <person name="Land M."/>
            <person name="Hauser L."/>
            <person name="Kyrpides N."/>
            <person name="Lykidis A."/>
            <person name="Hemme C."/>
            <person name="Fields M.W."/>
            <person name="He Z."/>
            <person name="Zhou J."/>
            <person name="Richardson P."/>
        </authorList>
    </citation>
    <scope>NUCLEOTIDE SEQUENCE [LARGE SCALE GENOMIC DNA]</scope>
    <source>
        <strain>ATCC 33223 / DSM 2355 / 39E</strain>
    </source>
</reference>
<organism>
    <name type="scientific">Thermoanaerobacter pseudethanolicus (strain ATCC 33223 / 39E)</name>
    <name type="common">Clostridium thermohydrosulfuricum</name>
    <dbReference type="NCBI Taxonomy" id="340099"/>
    <lineage>
        <taxon>Bacteria</taxon>
        <taxon>Bacillati</taxon>
        <taxon>Bacillota</taxon>
        <taxon>Clostridia</taxon>
        <taxon>Thermoanaerobacterales</taxon>
        <taxon>Thermoanaerobacteraceae</taxon>
        <taxon>Thermoanaerobacter</taxon>
    </lineage>
</organism>
<evidence type="ECO:0000255" key="1">
    <source>
        <dbReference type="HAMAP-Rule" id="MF_00169"/>
    </source>
</evidence>
<keyword id="KW-0028">Amino-acid biosynthesis</keyword>
<keyword id="KW-0057">Aromatic amino acid biosynthesis</keyword>
<keyword id="KW-0456">Lyase</keyword>
<keyword id="KW-1185">Reference proteome</keyword>
<comment type="function">
    <text evidence="1">Catalyzes a trans-dehydration via an enolate intermediate.</text>
</comment>
<comment type="catalytic activity">
    <reaction evidence="1">
        <text>3-dehydroquinate = 3-dehydroshikimate + H2O</text>
        <dbReference type="Rhea" id="RHEA:21096"/>
        <dbReference type="ChEBI" id="CHEBI:15377"/>
        <dbReference type="ChEBI" id="CHEBI:16630"/>
        <dbReference type="ChEBI" id="CHEBI:32364"/>
        <dbReference type="EC" id="4.2.1.10"/>
    </reaction>
</comment>
<comment type="pathway">
    <text evidence="1">Metabolic intermediate biosynthesis; chorismate biosynthesis; chorismate from D-erythrose 4-phosphate and phosphoenolpyruvate: step 3/7.</text>
</comment>
<comment type="subunit">
    <text evidence="1">Homododecamer.</text>
</comment>
<comment type="similarity">
    <text evidence="1">Belongs to the type-II 3-dehydroquinase family.</text>
</comment>
<name>AROQ_THEP3</name>
<feature type="chain" id="PRO_1000097627" description="3-dehydroquinate dehydratase">
    <location>
        <begin position="1"/>
        <end position="148"/>
    </location>
</feature>
<feature type="active site" description="Proton acceptor" evidence="1">
    <location>
        <position position="23"/>
    </location>
</feature>
<feature type="active site" description="Proton donor" evidence="1">
    <location>
        <position position="100"/>
    </location>
</feature>
<feature type="binding site" evidence="1">
    <location>
        <position position="74"/>
    </location>
    <ligand>
        <name>substrate</name>
    </ligand>
</feature>
<feature type="binding site" evidence="1">
    <location>
        <position position="80"/>
    </location>
    <ligand>
        <name>substrate</name>
    </ligand>
</feature>
<feature type="binding site" evidence="1">
    <location>
        <position position="87"/>
    </location>
    <ligand>
        <name>substrate</name>
    </ligand>
</feature>
<feature type="binding site" evidence="1">
    <location>
        <begin position="101"/>
        <end position="102"/>
    </location>
    <ligand>
        <name>substrate</name>
    </ligand>
</feature>
<feature type="binding site" evidence="1">
    <location>
        <position position="111"/>
    </location>
    <ligand>
        <name>substrate</name>
    </ligand>
</feature>
<feature type="site" description="Transition state stabilizer" evidence="1">
    <location>
        <position position="18"/>
    </location>
</feature>
<gene>
    <name evidence="1" type="primary">aroQ</name>
    <name type="ordered locus">Teth39_1084</name>
</gene>
<protein>
    <recommendedName>
        <fullName evidence="1">3-dehydroquinate dehydratase</fullName>
        <shortName evidence="1">3-dehydroquinase</shortName>
        <ecNumber evidence="1">4.2.1.10</ecNumber>
    </recommendedName>
    <alternativeName>
        <fullName evidence="1">Type II DHQase</fullName>
    </alternativeName>
</protein>
<accession>B0K9C6</accession>
<dbReference type="EC" id="4.2.1.10" evidence="1"/>
<dbReference type="EMBL" id="CP000924">
    <property type="protein sequence ID" value="ABY94739.1"/>
    <property type="molecule type" value="Genomic_DNA"/>
</dbReference>
<dbReference type="RefSeq" id="WP_009052328.1">
    <property type="nucleotide sequence ID" value="NC_010321.1"/>
</dbReference>
<dbReference type="SMR" id="B0K9C6"/>
<dbReference type="STRING" id="340099.Teth39_1084"/>
<dbReference type="KEGG" id="tpd:Teth39_1084"/>
<dbReference type="eggNOG" id="COG0757">
    <property type="taxonomic scope" value="Bacteria"/>
</dbReference>
<dbReference type="HOGENOM" id="CLU_090968_1_0_9"/>
<dbReference type="UniPathway" id="UPA00053">
    <property type="reaction ID" value="UER00086"/>
</dbReference>
<dbReference type="Proteomes" id="UP000002156">
    <property type="component" value="Chromosome"/>
</dbReference>
<dbReference type="GO" id="GO:0003855">
    <property type="term" value="F:3-dehydroquinate dehydratase activity"/>
    <property type="evidence" value="ECO:0007669"/>
    <property type="project" value="UniProtKB-UniRule"/>
</dbReference>
<dbReference type="GO" id="GO:0008652">
    <property type="term" value="P:amino acid biosynthetic process"/>
    <property type="evidence" value="ECO:0007669"/>
    <property type="project" value="UniProtKB-KW"/>
</dbReference>
<dbReference type="GO" id="GO:0009073">
    <property type="term" value="P:aromatic amino acid family biosynthetic process"/>
    <property type="evidence" value="ECO:0007669"/>
    <property type="project" value="UniProtKB-KW"/>
</dbReference>
<dbReference type="GO" id="GO:0009423">
    <property type="term" value="P:chorismate biosynthetic process"/>
    <property type="evidence" value="ECO:0007669"/>
    <property type="project" value="UniProtKB-UniRule"/>
</dbReference>
<dbReference type="GO" id="GO:0019631">
    <property type="term" value="P:quinate catabolic process"/>
    <property type="evidence" value="ECO:0007669"/>
    <property type="project" value="TreeGrafter"/>
</dbReference>
<dbReference type="CDD" id="cd00466">
    <property type="entry name" value="DHQase_II"/>
    <property type="match status" value="1"/>
</dbReference>
<dbReference type="Gene3D" id="3.40.50.9100">
    <property type="entry name" value="Dehydroquinase, class II"/>
    <property type="match status" value="1"/>
</dbReference>
<dbReference type="HAMAP" id="MF_00169">
    <property type="entry name" value="AroQ"/>
    <property type="match status" value="1"/>
</dbReference>
<dbReference type="InterPro" id="IPR001874">
    <property type="entry name" value="DHquinase_II"/>
</dbReference>
<dbReference type="InterPro" id="IPR018509">
    <property type="entry name" value="DHquinase_II_CS"/>
</dbReference>
<dbReference type="InterPro" id="IPR036441">
    <property type="entry name" value="DHquinase_II_sf"/>
</dbReference>
<dbReference type="NCBIfam" id="TIGR01088">
    <property type="entry name" value="aroQ"/>
    <property type="match status" value="1"/>
</dbReference>
<dbReference type="NCBIfam" id="NF003805">
    <property type="entry name" value="PRK05395.1-2"/>
    <property type="match status" value="1"/>
</dbReference>
<dbReference type="NCBIfam" id="NF003806">
    <property type="entry name" value="PRK05395.1-3"/>
    <property type="match status" value="1"/>
</dbReference>
<dbReference type="NCBIfam" id="NF003807">
    <property type="entry name" value="PRK05395.1-4"/>
    <property type="match status" value="1"/>
</dbReference>
<dbReference type="PANTHER" id="PTHR21272">
    <property type="entry name" value="CATABOLIC 3-DEHYDROQUINASE"/>
    <property type="match status" value="1"/>
</dbReference>
<dbReference type="PANTHER" id="PTHR21272:SF3">
    <property type="entry name" value="CATABOLIC 3-DEHYDROQUINASE"/>
    <property type="match status" value="1"/>
</dbReference>
<dbReference type="Pfam" id="PF01220">
    <property type="entry name" value="DHquinase_II"/>
    <property type="match status" value="1"/>
</dbReference>
<dbReference type="PIRSF" id="PIRSF001399">
    <property type="entry name" value="DHquinase_II"/>
    <property type="match status" value="1"/>
</dbReference>
<dbReference type="SUPFAM" id="SSF52304">
    <property type="entry name" value="Type II 3-dehydroquinate dehydratase"/>
    <property type="match status" value="1"/>
</dbReference>
<dbReference type="PROSITE" id="PS01029">
    <property type="entry name" value="DEHYDROQUINASE_II"/>
    <property type="match status" value="1"/>
</dbReference>